<evidence type="ECO:0000255" key="1">
    <source>
        <dbReference type="HAMAP-Rule" id="MF_00149"/>
    </source>
</evidence>
<feature type="chain" id="PRO_1000096672" description="DNA mismatch repair protein MutL">
    <location>
        <begin position="1"/>
        <end position="618"/>
    </location>
</feature>
<proteinExistence type="inferred from homology"/>
<gene>
    <name evidence="1" type="primary">mutL</name>
    <name type="ordered locus">PGN_1555</name>
</gene>
<protein>
    <recommendedName>
        <fullName evidence="1">DNA mismatch repair protein MutL</fullName>
    </recommendedName>
</protein>
<keyword id="KW-0227">DNA damage</keyword>
<keyword id="KW-0234">DNA repair</keyword>
<name>MUTL_PORG3</name>
<comment type="function">
    <text evidence="1">This protein is involved in the repair of mismatches in DNA. It is required for dam-dependent methyl-directed DNA mismatch repair. May act as a 'molecular matchmaker', a protein that promotes the formation of a stable complex between two or more DNA-binding proteins in an ATP-dependent manner without itself being part of a final effector complex.</text>
</comment>
<comment type="similarity">
    <text evidence="1">Belongs to the DNA mismatch repair MutL/HexB family.</text>
</comment>
<reference key="1">
    <citation type="journal article" date="2008" name="DNA Res.">
        <title>Determination of the genome sequence of Porphyromonas gingivalis strain ATCC 33277 and genomic comparison with strain W83 revealed extensive genome rearrangements in P. gingivalis.</title>
        <authorList>
            <person name="Naito M."/>
            <person name="Hirakawa H."/>
            <person name="Yamashita A."/>
            <person name="Ohara N."/>
            <person name="Shoji M."/>
            <person name="Yukitake H."/>
            <person name="Nakayama K."/>
            <person name="Toh H."/>
            <person name="Yoshimura F."/>
            <person name="Kuhara S."/>
            <person name="Hattori M."/>
            <person name="Hayashi T."/>
            <person name="Nakayama K."/>
        </authorList>
    </citation>
    <scope>NUCLEOTIDE SEQUENCE [LARGE SCALE GENOMIC DNA]</scope>
    <source>
        <strain>ATCC 33277 / DSM 20709 / CIP 103683 / JCM 12257 / NCTC 11834 / 2561</strain>
    </source>
</reference>
<organism>
    <name type="scientific">Porphyromonas gingivalis (strain ATCC 33277 / DSM 20709 / CIP 103683 / JCM 12257 / NCTC 11834 / 2561)</name>
    <dbReference type="NCBI Taxonomy" id="431947"/>
    <lineage>
        <taxon>Bacteria</taxon>
        <taxon>Pseudomonadati</taxon>
        <taxon>Bacteroidota</taxon>
        <taxon>Bacteroidia</taxon>
        <taxon>Bacteroidales</taxon>
        <taxon>Porphyromonadaceae</taxon>
        <taxon>Porphyromonas</taxon>
    </lineage>
</organism>
<dbReference type="EMBL" id="AP009380">
    <property type="protein sequence ID" value="BAG34074.1"/>
    <property type="molecule type" value="Genomic_DNA"/>
</dbReference>
<dbReference type="RefSeq" id="WP_012458371.1">
    <property type="nucleotide sequence ID" value="NC_010729.1"/>
</dbReference>
<dbReference type="SMR" id="B2RL29"/>
<dbReference type="GeneID" id="29256732"/>
<dbReference type="KEGG" id="pgn:PGN_1555"/>
<dbReference type="eggNOG" id="COG0323">
    <property type="taxonomic scope" value="Bacteria"/>
</dbReference>
<dbReference type="HOGENOM" id="CLU_004131_4_0_10"/>
<dbReference type="OrthoDB" id="9763467at2"/>
<dbReference type="BioCyc" id="PGIN431947:G1G2V-1757-MONOMER"/>
<dbReference type="Proteomes" id="UP000008842">
    <property type="component" value="Chromosome"/>
</dbReference>
<dbReference type="GO" id="GO:0032300">
    <property type="term" value="C:mismatch repair complex"/>
    <property type="evidence" value="ECO:0007669"/>
    <property type="project" value="InterPro"/>
</dbReference>
<dbReference type="GO" id="GO:0005524">
    <property type="term" value="F:ATP binding"/>
    <property type="evidence" value="ECO:0007669"/>
    <property type="project" value="InterPro"/>
</dbReference>
<dbReference type="GO" id="GO:0016887">
    <property type="term" value="F:ATP hydrolysis activity"/>
    <property type="evidence" value="ECO:0007669"/>
    <property type="project" value="InterPro"/>
</dbReference>
<dbReference type="GO" id="GO:0140664">
    <property type="term" value="F:ATP-dependent DNA damage sensor activity"/>
    <property type="evidence" value="ECO:0007669"/>
    <property type="project" value="InterPro"/>
</dbReference>
<dbReference type="GO" id="GO:0030983">
    <property type="term" value="F:mismatched DNA binding"/>
    <property type="evidence" value="ECO:0007669"/>
    <property type="project" value="InterPro"/>
</dbReference>
<dbReference type="GO" id="GO:0006298">
    <property type="term" value="P:mismatch repair"/>
    <property type="evidence" value="ECO:0007669"/>
    <property type="project" value="UniProtKB-UniRule"/>
</dbReference>
<dbReference type="CDD" id="cd16926">
    <property type="entry name" value="HATPase_MutL-MLH-PMS-like"/>
    <property type="match status" value="1"/>
</dbReference>
<dbReference type="CDD" id="cd00782">
    <property type="entry name" value="MutL_Trans"/>
    <property type="match status" value="1"/>
</dbReference>
<dbReference type="FunFam" id="3.30.565.10:FF:000003">
    <property type="entry name" value="DNA mismatch repair endonuclease MutL"/>
    <property type="match status" value="1"/>
</dbReference>
<dbReference type="Gene3D" id="3.30.230.10">
    <property type="match status" value="1"/>
</dbReference>
<dbReference type="Gene3D" id="3.30.565.10">
    <property type="entry name" value="Histidine kinase-like ATPase, C-terminal domain"/>
    <property type="match status" value="1"/>
</dbReference>
<dbReference type="Gene3D" id="3.30.1540.20">
    <property type="entry name" value="MutL, C-terminal domain, dimerisation subdomain"/>
    <property type="match status" value="1"/>
</dbReference>
<dbReference type="Gene3D" id="3.30.1370.100">
    <property type="entry name" value="MutL, C-terminal domain, regulatory subdomain"/>
    <property type="match status" value="1"/>
</dbReference>
<dbReference type="HAMAP" id="MF_00149">
    <property type="entry name" value="DNA_mis_repair"/>
    <property type="match status" value="1"/>
</dbReference>
<dbReference type="InterPro" id="IPR014762">
    <property type="entry name" value="DNA_mismatch_repair_CS"/>
</dbReference>
<dbReference type="InterPro" id="IPR020667">
    <property type="entry name" value="DNA_mismatch_repair_MutL"/>
</dbReference>
<dbReference type="InterPro" id="IPR013507">
    <property type="entry name" value="DNA_mismatch_S5_2-like"/>
</dbReference>
<dbReference type="InterPro" id="IPR036890">
    <property type="entry name" value="HATPase_C_sf"/>
</dbReference>
<dbReference type="InterPro" id="IPR002099">
    <property type="entry name" value="MutL/Mlh/PMS"/>
</dbReference>
<dbReference type="InterPro" id="IPR038973">
    <property type="entry name" value="MutL/Mlh/Pms-like"/>
</dbReference>
<dbReference type="InterPro" id="IPR014790">
    <property type="entry name" value="MutL_C"/>
</dbReference>
<dbReference type="InterPro" id="IPR042120">
    <property type="entry name" value="MutL_C_dimsub"/>
</dbReference>
<dbReference type="InterPro" id="IPR042121">
    <property type="entry name" value="MutL_C_regsub"/>
</dbReference>
<dbReference type="InterPro" id="IPR037198">
    <property type="entry name" value="MutL_C_sf"/>
</dbReference>
<dbReference type="InterPro" id="IPR020568">
    <property type="entry name" value="Ribosomal_Su5_D2-typ_SF"/>
</dbReference>
<dbReference type="InterPro" id="IPR014721">
    <property type="entry name" value="Ribsml_uS5_D2-typ_fold_subgr"/>
</dbReference>
<dbReference type="NCBIfam" id="TIGR00585">
    <property type="entry name" value="mutl"/>
    <property type="match status" value="1"/>
</dbReference>
<dbReference type="PANTHER" id="PTHR10073">
    <property type="entry name" value="DNA MISMATCH REPAIR PROTEIN MLH, PMS, MUTL"/>
    <property type="match status" value="1"/>
</dbReference>
<dbReference type="PANTHER" id="PTHR10073:SF12">
    <property type="entry name" value="DNA MISMATCH REPAIR PROTEIN MLH1"/>
    <property type="match status" value="1"/>
</dbReference>
<dbReference type="Pfam" id="PF01119">
    <property type="entry name" value="DNA_mis_repair"/>
    <property type="match status" value="1"/>
</dbReference>
<dbReference type="Pfam" id="PF13589">
    <property type="entry name" value="HATPase_c_3"/>
    <property type="match status" value="1"/>
</dbReference>
<dbReference type="Pfam" id="PF08676">
    <property type="entry name" value="MutL_C"/>
    <property type="match status" value="1"/>
</dbReference>
<dbReference type="SMART" id="SM01340">
    <property type="entry name" value="DNA_mis_repair"/>
    <property type="match status" value="1"/>
</dbReference>
<dbReference type="SMART" id="SM00853">
    <property type="entry name" value="MutL_C"/>
    <property type="match status" value="1"/>
</dbReference>
<dbReference type="SUPFAM" id="SSF55874">
    <property type="entry name" value="ATPase domain of HSP90 chaperone/DNA topoisomerase II/histidine kinase"/>
    <property type="match status" value="1"/>
</dbReference>
<dbReference type="SUPFAM" id="SSF118116">
    <property type="entry name" value="DNA mismatch repair protein MutL"/>
    <property type="match status" value="1"/>
</dbReference>
<dbReference type="SUPFAM" id="SSF54211">
    <property type="entry name" value="Ribosomal protein S5 domain 2-like"/>
    <property type="match status" value="1"/>
</dbReference>
<dbReference type="PROSITE" id="PS00058">
    <property type="entry name" value="DNA_MISMATCH_REPAIR_1"/>
    <property type="match status" value="1"/>
</dbReference>
<sequence>MSDVIRLLPDSIANQIAAGEVIQRPASVVKELLENALDAGASIIRLDVREAGRELIRVTDNGKGMSQSDARMAFERHATSKIASFQDLFSLRTMGFRGEALASIAAVAQVELLTRRAEDELGTRLTINGSEVGEVATVTSPQGCILCVKNLFYNVPARRKFLKSNETEFRHILTEYERVALVNPQVAFSIYHSGELVQDLPPSPLKKRILDVFGKRMEKDLIPIGIKSPITNISGFVGRPDGARKRGALQYFFVNGRFMRHPYFHKAVMAAYEAIIPQGTMPNYFLYFDLEPSQIDVNIHPTKTEIKFSDEQAIFKLIGVVIREALSSSNAVPAIDFDRKELIDIPAYQGPGKNVVRPPVDLDPSYNPFKETGLTEPIRSSRRQSPDMGWNELFKQFEAKRDAEKMAEPPIRSEGLFASTDFTPSAVSATPSTDMLCYVHRGRYLVTTLSRGLALVDFHRAHKRILYDRFMADESRRHIEQQQLLFPELLEFNPSDASAVKAAVDELQSVGFDLSPLGVSSYSLLAAPVQIIDCAADVVRDVIHTTLEDGRSSHEQMLELIATQIAEYQAIPCGKTPTAEEASDLLAELFASNDSTYTPDGKLIVSIIEEADIARRFE</sequence>
<accession>B2RL29</accession>